<gene>
    <name evidence="1" type="primary">aspS</name>
    <name type="ordered locus">lpg1478</name>
</gene>
<feature type="chain" id="PRO_0000110890" description="Aspartate--tRNA(Asp/Asn) ligase">
    <location>
        <begin position="1"/>
        <end position="593"/>
    </location>
</feature>
<feature type="region of interest" description="Aspartate" evidence="1">
    <location>
        <begin position="197"/>
        <end position="200"/>
    </location>
</feature>
<feature type="binding site" evidence="1">
    <location>
        <position position="173"/>
    </location>
    <ligand>
        <name>L-aspartate</name>
        <dbReference type="ChEBI" id="CHEBI:29991"/>
    </ligand>
</feature>
<feature type="binding site" evidence="1">
    <location>
        <begin position="219"/>
        <end position="221"/>
    </location>
    <ligand>
        <name>ATP</name>
        <dbReference type="ChEBI" id="CHEBI:30616"/>
    </ligand>
</feature>
<feature type="binding site" evidence="1">
    <location>
        <position position="219"/>
    </location>
    <ligand>
        <name>L-aspartate</name>
        <dbReference type="ChEBI" id="CHEBI:29991"/>
    </ligand>
</feature>
<feature type="binding site" evidence="1">
    <location>
        <position position="228"/>
    </location>
    <ligand>
        <name>ATP</name>
        <dbReference type="ChEBI" id="CHEBI:30616"/>
    </ligand>
</feature>
<feature type="binding site" evidence="1">
    <location>
        <position position="451"/>
    </location>
    <ligand>
        <name>L-aspartate</name>
        <dbReference type="ChEBI" id="CHEBI:29991"/>
    </ligand>
</feature>
<feature type="binding site" evidence="1">
    <location>
        <position position="485"/>
    </location>
    <ligand>
        <name>ATP</name>
        <dbReference type="ChEBI" id="CHEBI:30616"/>
    </ligand>
</feature>
<feature type="binding site" evidence="1">
    <location>
        <position position="492"/>
    </location>
    <ligand>
        <name>L-aspartate</name>
        <dbReference type="ChEBI" id="CHEBI:29991"/>
    </ligand>
</feature>
<feature type="binding site" evidence="1">
    <location>
        <begin position="537"/>
        <end position="540"/>
    </location>
    <ligand>
        <name>ATP</name>
        <dbReference type="ChEBI" id="CHEBI:30616"/>
    </ligand>
</feature>
<feature type="site" description="Important for tRNA non-discrimination" evidence="1">
    <location>
        <position position="30"/>
    </location>
</feature>
<feature type="site" description="Important for tRNA non-discrimination" evidence="1">
    <location>
        <position position="81"/>
    </location>
</feature>
<dbReference type="EC" id="6.1.1.23" evidence="1"/>
<dbReference type="EMBL" id="AE017354">
    <property type="protein sequence ID" value="AAU27560.1"/>
    <property type="molecule type" value="Genomic_DNA"/>
</dbReference>
<dbReference type="RefSeq" id="WP_010947207.1">
    <property type="nucleotide sequence ID" value="NC_002942.5"/>
</dbReference>
<dbReference type="RefSeq" id="YP_095507.1">
    <property type="nucleotide sequence ID" value="NC_002942.5"/>
</dbReference>
<dbReference type="SMR" id="Q5ZVG2"/>
<dbReference type="STRING" id="272624.lpg1478"/>
<dbReference type="PaxDb" id="272624-lpg1478"/>
<dbReference type="GeneID" id="57035468"/>
<dbReference type="KEGG" id="lpn:lpg1478"/>
<dbReference type="PATRIC" id="fig|272624.6.peg.1551"/>
<dbReference type="eggNOG" id="COG0173">
    <property type="taxonomic scope" value="Bacteria"/>
</dbReference>
<dbReference type="HOGENOM" id="CLU_014330_3_2_6"/>
<dbReference type="OrthoDB" id="9802326at2"/>
<dbReference type="Proteomes" id="UP000000609">
    <property type="component" value="Chromosome"/>
</dbReference>
<dbReference type="GO" id="GO:0005737">
    <property type="term" value="C:cytoplasm"/>
    <property type="evidence" value="ECO:0007669"/>
    <property type="project" value="UniProtKB-SubCell"/>
</dbReference>
<dbReference type="GO" id="GO:0004815">
    <property type="term" value="F:aspartate-tRNA ligase activity"/>
    <property type="evidence" value="ECO:0007669"/>
    <property type="project" value="UniProtKB-UniRule"/>
</dbReference>
<dbReference type="GO" id="GO:0050560">
    <property type="term" value="F:aspartate-tRNA(Asn) ligase activity"/>
    <property type="evidence" value="ECO:0007669"/>
    <property type="project" value="UniProtKB-EC"/>
</dbReference>
<dbReference type="GO" id="GO:0005524">
    <property type="term" value="F:ATP binding"/>
    <property type="evidence" value="ECO:0007669"/>
    <property type="project" value="UniProtKB-UniRule"/>
</dbReference>
<dbReference type="GO" id="GO:0003676">
    <property type="term" value="F:nucleic acid binding"/>
    <property type="evidence" value="ECO:0007669"/>
    <property type="project" value="InterPro"/>
</dbReference>
<dbReference type="GO" id="GO:0006422">
    <property type="term" value="P:aspartyl-tRNA aminoacylation"/>
    <property type="evidence" value="ECO:0007669"/>
    <property type="project" value="UniProtKB-UniRule"/>
</dbReference>
<dbReference type="CDD" id="cd00777">
    <property type="entry name" value="AspRS_core"/>
    <property type="match status" value="1"/>
</dbReference>
<dbReference type="CDD" id="cd04317">
    <property type="entry name" value="EcAspRS_like_N"/>
    <property type="match status" value="1"/>
</dbReference>
<dbReference type="Gene3D" id="3.30.930.10">
    <property type="entry name" value="Bira Bifunctional Protein, Domain 2"/>
    <property type="match status" value="1"/>
</dbReference>
<dbReference type="Gene3D" id="3.30.1360.30">
    <property type="entry name" value="GAD-like domain"/>
    <property type="match status" value="1"/>
</dbReference>
<dbReference type="Gene3D" id="2.40.50.140">
    <property type="entry name" value="Nucleic acid-binding proteins"/>
    <property type="match status" value="1"/>
</dbReference>
<dbReference type="HAMAP" id="MF_00044">
    <property type="entry name" value="Asp_tRNA_synth_type1"/>
    <property type="match status" value="1"/>
</dbReference>
<dbReference type="InterPro" id="IPR004364">
    <property type="entry name" value="Aa-tRNA-synt_II"/>
</dbReference>
<dbReference type="InterPro" id="IPR006195">
    <property type="entry name" value="aa-tRNA-synth_II"/>
</dbReference>
<dbReference type="InterPro" id="IPR045864">
    <property type="entry name" value="aa-tRNA-synth_II/BPL/LPL"/>
</dbReference>
<dbReference type="InterPro" id="IPR004524">
    <property type="entry name" value="Asp-tRNA-ligase_1"/>
</dbReference>
<dbReference type="InterPro" id="IPR047089">
    <property type="entry name" value="Asp-tRNA-ligase_1_N"/>
</dbReference>
<dbReference type="InterPro" id="IPR002312">
    <property type="entry name" value="Asp/Asn-tRNA-synth_IIb"/>
</dbReference>
<dbReference type="InterPro" id="IPR047090">
    <property type="entry name" value="AspRS_core"/>
</dbReference>
<dbReference type="InterPro" id="IPR004115">
    <property type="entry name" value="GAD-like_sf"/>
</dbReference>
<dbReference type="InterPro" id="IPR029351">
    <property type="entry name" value="GAD_dom"/>
</dbReference>
<dbReference type="InterPro" id="IPR012340">
    <property type="entry name" value="NA-bd_OB-fold"/>
</dbReference>
<dbReference type="InterPro" id="IPR004365">
    <property type="entry name" value="NA-bd_OB_tRNA"/>
</dbReference>
<dbReference type="NCBIfam" id="TIGR00459">
    <property type="entry name" value="aspS_bact"/>
    <property type="match status" value="1"/>
</dbReference>
<dbReference type="NCBIfam" id="NF001750">
    <property type="entry name" value="PRK00476.1"/>
    <property type="match status" value="1"/>
</dbReference>
<dbReference type="PANTHER" id="PTHR22594:SF5">
    <property type="entry name" value="ASPARTATE--TRNA LIGASE, MITOCHONDRIAL"/>
    <property type="match status" value="1"/>
</dbReference>
<dbReference type="PANTHER" id="PTHR22594">
    <property type="entry name" value="ASPARTYL/LYSYL-TRNA SYNTHETASE"/>
    <property type="match status" value="1"/>
</dbReference>
<dbReference type="Pfam" id="PF02938">
    <property type="entry name" value="GAD"/>
    <property type="match status" value="1"/>
</dbReference>
<dbReference type="Pfam" id="PF00152">
    <property type="entry name" value="tRNA-synt_2"/>
    <property type="match status" value="1"/>
</dbReference>
<dbReference type="Pfam" id="PF01336">
    <property type="entry name" value="tRNA_anti-codon"/>
    <property type="match status" value="1"/>
</dbReference>
<dbReference type="PRINTS" id="PR01042">
    <property type="entry name" value="TRNASYNTHASP"/>
</dbReference>
<dbReference type="SUPFAM" id="SSF55681">
    <property type="entry name" value="Class II aaRS and biotin synthetases"/>
    <property type="match status" value="1"/>
</dbReference>
<dbReference type="SUPFAM" id="SSF55261">
    <property type="entry name" value="GAD domain-like"/>
    <property type="match status" value="1"/>
</dbReference>
<dbReference type="SUPFAM" id="SSF50249">
    <property type="entry name" value="Nucleic acid-binding proteins"/>
    <property type="match status" value="1"/>
</dbReference>
<dbReference type="PROSITE" id="PS50862">
    <property type="entry name" value="AA_TRNA_LIGASE_II"/>
    <property type="match status" value="1"/>
</dbReference>
<name>SYDND_LEGPH</name>
<accession>Q5ZVG2</accession>
<proteinExistence type="inferred from homology"/>
<organism>
    <name type="scientific">Legionella pneumophila subsp. pneumophila (strain Philadelphia 1 / ATCC 33152 / DSM 7513)</name>
    <dbReference type="NCBI Taxonomy" id="272624"/>
    <lineage>
        <taxon>Bacteria</taxon>
        <taxon>Pseudomonadati</taxon>
        <taxon>Pseudomonadota</taxon>
        <taxon>Gammaproteobacteria</taxon>
        <taxon>Legionellales</taxon>
        <taxon>Legionellaceae</taxon>
        <taxon>Legionella</taxon>
    </lineage>
</organism>
<evidence type="ECO:0000255" key="1">
    <source>
        <dbReference type="HAMAP-Rule" id="MF_00044"/>
    </source>
</evidence>
<sequence length="593" mass="66909">MRTHYCSAVNELSLDKQITVCGWVHNRRDHGGVIFLDIRDRSGLLQVVYEPENKEIFAIAEKLRSEFVVRVTGIVRKRPEGMINDKMETGRVEVIGTQLEILNQSPTPPFLPDDHQIINEDLRYKYRYIDLRRAVMQKKLTLRHKLNSCIRNYLNEQNFLDIETPMLTKATPEGARDYLVPSRVHPGQFYALPQSPQLFKQLLMMSGFDKYYQIVRCFRDEDLRADRQPEFTQLDIEMAFINEEDILQLIEGLLKIVFKEILNITLPDKLPRMSYKEAMTRYGSDKPDLRNPLELIDIADLVKDCDFNVFASAANDNSGRVVALKLPNGCDLSRKDLDNYGQFVTIYGAKGLAYIKVNDLSAGMAGLQSPILKFLSETAVHSILNRVEAQTGDVIFFGADKAHVVNESMGALRNKLGHDRNLINSGWQLLWVVDWPMFELDPQSNKLQPMHHPFTSPQELSAEALRSKPTQTLAKAYDIVINGYEIGGGSIRIHQPELQKTVFDLIGIDEQEAHEKFGFLLDALQYGAPPHGGIALGIDRLAMLLTDSTSIRDVIAFPKTQTASCPLTSAPSPAGNAQLTELGIRLAPTITTK</sequence>
<reference key="1">
    <citation type="journal article" date="2004" name="Science">
        <title>The genomic sequence of the accidental pathogen Legionella pneumophila.</title>
        <authorList>
            <person name="Chien M."/>
            <person name="Morozova I."/>
            <person name="Shi S."/>
            <person name="Sheng H."/>
            <person name="Chen J."/>
            <person name="Gomez S.M."/>
            <person name="Asamani G."/>
            <person name="Hill K."/>
            <person name="Nuara J."/>
            <person name="Feder M."/>
            <person name="Rineer J."/>
            <person name="Greenberg J.J."/>
            <person name="Steshenko V."/>
            <person name="Park S.H."/>
            <person name="Zhao B."/>
            <person name="Teplitskaya E."/>
            <person name="Edwards J.R."/>
            <person name="Pampou S."/>
            <person name="Georghiou A."/>
            <person name="Chou I.-C."/>
            <person name="Iannuccilli W."/>
            <person name="Ulz M.E."/>
            <person name="Kim D.H."/>
            <person name="Geringer-Sameth A."/>
            <person name="Goldsberry C."/>
            <person name="Morozov P."/>
            <person name="Fischer S.G."/>
            <person name="Segal G."/>
            <person name="Qu X."/>
            <person name="Rzhetsky A."/>
            <person name="Zhang P."/>
            <person name="Cayanis E."/>
            <person name="De Jong P.J."/>
            <person name="Ju J."/>
            <person name="Kalachikov S."/>
            <person name="Shuman H.A."/>
            <person name="Russo J.J."/>
        </authorList>
    </citation>
    <scope>NUCLEOTIDE SEQUENCE [LARGE SCALE GENOMIC DNA]</scope>
    <source>
        <strain>Philadelphia 1 / ATCC 33152 / DSM 7513</strain>
    </source>
</reference>
<protein>
    <recommendedName>
        <fullName evidence="1">Aspartate--tRNA(Asp/Asn) ligase</fullName>
        <ecNumber evidence="1">6.1.1.23</ecNumber>
    </recommendedName>
    <alternativeName>
        <fullName evidence="1">Aspartyl-tRNA synthetase</fullName>
        <shortName evidence="1">AspRS</shortName>
    </alternativeName>
    <alternativeName>
        <fullName evidence="1">Non-discriminating aspartyl-tRNA synthetase</fullName>
        <shortName evidence="1">ND-AspRS</shortName>
    </alternativeName>
</protein>
<keyword id="KW-0030">Aminoacyl-tRNA synthetase</keyword>
<keyword id="KW-0067">ATP-binding</keyword>
<keyword id="KW-0963">Cytoplasm</keyword>
<keyword id="KW-0436">Ligase</keyword>
<keyword id="KW-0547">Nucleotide-binding</keyword>
<keyword id="KW-0648">Protein biosynthesis</keyword>
<keyword id="KW-1185">Reference proteome</keyword>
<comment type="function">
    <text evidence="1">Aspartyl-tRNA synthetase with relaxed tRNA specificity since it is able to aspartylate not only its cognate tRNA(Asp) but also tRNA(Asn). Reaction proceeds in two steps: L-aspartate is first activated by ATP to form Asp-AMP and then transferred to the acceptor end of tRNA(Asp/Asn).</text>
</comment>
<comment type="catalytic activity">
    <reaction evidence="1">
        <text>tRNA(Asx) + L-aspartate + ATP = L-aspartyl-tRNA(Asx) + AMP + diphosphate</text>
        <dbReference type="Rhea" id="RHEA:18349"/>
        <dbReference type="Rhea" id="RHEA-COMP:9710"/>
        <dbReference type="Rhea" id="RHEA-COMP:9711"/>
        <dbReference type="ChEBI" id="CHEBI:29991"/>
        <dbReference type="ChEBI" id="CHEBI:30616"/>
        <dbReference type="ChEBI" id="CHEBI:33019"/>
        <dbReference type="ChEBI" id="CHEBI:78442"/>
        <dbReference type="ChEBI" id="CHEBI:78516"/>
        <dbReference type="ChEBI" id="CHEBI:456215"/>
        <dbReference type="EC" id="6.1.1.23"/>
    </reaction>
</comment>
<comment type="subunit">
    <text evidence="1">Homodimer.</text>
</comment>
<comment type="subcellular location">
    <subcellularLocation>
        <location evidence="1">Cytoplasm</location>
    </subcellularLocation>
</comment>
<comment type="similarity">
    <text evidence="1">Belongs to the class-II aminoacyl-tRNA synthetase family. Type 1 subfamily.</text>
</comment>